<proteinExistence type="inferred from homology"/>
<accession>B5RM50</accession>
<gene>
    <name evidence="1" type="primary">rpsH</name>
    <name type="ordered locus">BDU_495</name>
</gene>
<evidence type="ECO:0000255" key="1">
    <source>
        <dbReference type="HAMAP-Rule" id="MF_01302"/>
    </source>
</evidence>
<evidence type="ECO:0000305" key="2"/>
<reference key="1">
    <citation type="journal article" date="2008" name="PLoS Genet.">
        <title>The genome of Borrelia recurrentis, the agent of deadly louse-borne relapsing fever, is a degraded subset of tick-borne Borrelia duttonii.</title>
        <authorList>
            <person name="Lescot M."/>
            <person name="Audic S."/>
            <person name="Robert C."/>
            <person name="Nguyen T.T."/>
            <person name="Blanc G."/>
            <person name="Cutler S.J."/>
            <person name="Wincker P."/>
            <person name="Couloux A."/>
            <person name="Claverie J.-M."/>
            <person name="Raoult D."/>
            <person name="Drancourt M."/>
        </authorList>
    </citation>
    <scope>NUCLEOTIDE SEQUENCE [LARGE SCALE GENOMIC DNA]</scope>
    <source>
        <strain>Ly</strain>
    </source>
</reference>
<keyword id="KW-0687">Ribonucleoprotein</keyword>
<keyword id="KW-0689">Ribosomal protein</keyword>
<keyword id="KW-0694">RNA-binding</keyword>
<keyword id="KW-0699">rRNA-binding</keyword>
<organism>
    <name type="scientific">Borrelia duttonii (strain Ly)</name>
    <dbReference type="NCBI Taxonomy" id="412419"/>
    <lineage>
        <taxon>Bacteria</taxon>
        <taxon>Pseudomonadati</taxon>
        <taxon>Spirochaetota</taxon>
        <taxon>Spirochaetia</taxon>
        <taxon>Spirochaetales</taxon>
        <taxon>Borreliaceae</taxon>
        <taxon>Borrelia</taxon>
    </lineage>
</organism>
<name>RS8_BORDL</name>
<sequence>MAVTHSVGDMLTKIRNASRVKHESVDLKMSKINRSILDILKEEGYIKNYNIFDKKGIPFIKAMLNYDGKRNPAINRIDAISTPGRKVYSSYKNMPRIKNGYGILIVSSSKGVITGKQAKDNKVGGELICSVW</sequence>
<dbReference type="EMBL" id="CP000976">
    <property type="protein sequence ID" value="ACH93436.1"/>
    <property type="molecule type" value="Genomic_DNA"/>
</dbReference>
<dbReference type="RefSeq" id="WP_012538246.1">
    <property type="nucleotide sequence ID" value="NC_011229.1"/>
</dbReference>
<dbReference type="SMR" id="B5RM50"/>
<dbReference type="STRING" id="412419.BDU_495"/>
<dbReference type="KEGG" id="bdu:BDU_495"/>
<dbReference type="eggNOG" id="COG0096">
    <property type="taxonomic scope" value="Bacteria"/>
</dbReference>
<dbReference type="HOGENOM" id="CLU_098428_0_2_12"/>
<dbReference type="OrthoDB" id="9802617at2"/>
<dbReference type="Proteomes" id="UP000000611">
    <property type="component" value="Chromosome"/>
</dbReference>
<dbReference type="GO" id="GO:1990904">
    <property type="term" value="C:ribonucleoprotein complex"/>
    <property type="evidence" value="ECO:0007669"/>
    <property type="project" value="UniProtKB-KW"/>
</dbReference>
<dbReference type="GO" id="GO:0005840">
    <property type="term" value="C:ribosome"/>
    <property type="evidence" value="ECO:0007669"/>
    <property type="project" value="UniProtKB-KW"/>
</dbReference>
<dbReference type="GO" id="GO:0019843">
    <property type="term" value="F:rRNA binding"/>
    <property type="evidence" value="ECO:0007669"/>
    <property type="project" value="UniProtKB-UniRule"/>
</dbReference>
<dbReference type="GO" id="GO:0003735">
    <property type="term" value="F:structural constituent of ribosome"/>
    <property type="evidence" value="ECO:0007669"/>
    <property type="project" value="InterPro"/>
</dbReference>
<dbReference type="GO" id="GO:0006412">
    <property type="term" value="P:translation"/>
    <property type="evidence" value="ECO:0007669"/>
    <property type="project" value="UniProtKB-UniRule"/>
</dbReference>
<dbReference type="FunFam" id="3.30.1490.10:FF:000001">
    <property type="entry name" value="30S ribosomal protein S8"/>
    <property type="match status" value="1"/>
</dbReference>
<dbReference type="Gene3D" id="3.30.1370.30">
    <property type="match status" value="1"/>
</dbReference>
<dbReference type="Gene3D" id="3.30.1490.10">
    <property type="match status" value="1"/>
</dbReference>
<dbReference type="HAMAP" id="MF_01302_B">
    <property type="entry name" value="Ribosomal_uS8_B"/>
    <property type="match status" value="1"/>
</dbReference>
<dbReference type="InterPro" id="IPR000630">
    <property type="entry name" value="Ribosomal_uS8"/>
</dbReference>
<dbReference type="InterPro" id="IPR047863">
    <property type="entry name" value="Ribosomal_uS8_CS"/>
</dbReference>
<dbReference type="InterPro" id="IPR035987">
    <property type="entry name" value="Ribosomal_uS8_sf"/>
</dbReference>
<dbReference type="NCBIfam" id="NF001109">
    <property type="entry name" value="PRK00136.1"/>
    <property type="match status" value="1"/>
</dbReference>
<dbReference type="PANTHER" id="PTHR11758">
    <property type="entry name" value="40S RIBOSOMAL PROTEIN S15A"/>
    <property type="match status" value="1"/>
</dbReference>
<dbReference type="Pfam" id="PF00410">
    <property type="entry name" value="Ribosomal_S8"/>
    <property type="match status" value="1"/>
</dbReference>
<dbReference type="SUPFAM" id="SSF56047">
    <property type="entry name" value="Ribosomal protein S8"/>
    <property type="match status" value="1"/>
</dbReference>
<dbReference type="PROSITE" id="PS00053">
    <property type="entry name" value="RIBOSOMAL_S8"/>
    <property type="match status" value="1"/>
</dbReference>
<protein>
    <recommendedName>
        <fullName evidence="1">Small ribosomal subunit protein uS8</fullName>
    </recommendedName>
    <alternativeName>
        <fullName evidence="2">30S ribosomal protein S8</fullName>
    </alternativeName>
</protein>
<feature type="chain" id="PRO_1000140516" description="Small ribosomal subunit protein uS8">
    <location>
        <begin position="1"/>
        <end position="132"/>
    </location>
</feature>
<comment type="function">
    <text evidence="1">One of the primary rRNA binding proteins, it binds directly to 16S rRNA central domain where it helps coordinate assembly of the platform of the 30S subunit.</text>
</comment>
<comment type="subunit">
    <text evidence="1">Part of the 30S ribosomal subunit. Contacts proteins S5 and S12.</text>
</comment>
<comment type="similarity">
    <text evidence="1">Belongs to the universal ribosomal protein uS8 family.</text>
</comment>